<dbReference type="EMBL" id="AJ536666">
    <property type="protein sequence ID" value="CAD60664.1"/>
    <property type="molecule type" value="mRNA"/>
</dbReference>
<dbReference type="EMBL" id="AC007153">
    <property type="protein sequence ID" value="AAD30613.1"/>
    <property type="status" value="ALT_SEQ"/>
    <property type="molecule type" value="Genomic_DNA"/>
</dbReference>
<dbReference type="EMBL" id="CP002684">
    <property type="protein sequence ID" value="AEE27864.1"/>
    <property type="molecule type" value="Genomic_DNA"/>
</dbReference>
<dbReference type="PIR" id="B86190">
    <property type="entry name" value="B86190"/>
</dbReference>
<dbReference type="RefSeq" id="NP_172052.2">
    <property type="nucleotide sequence ID" value="NM_100441.3"/>
</dbReference>
<dbReference type="SMR" id="F4I8U2"/>
<dbReference type="FunCoup" id="F4I8U2">
    <property type="interactions" value="284"/>
</dbReference>
<dbReference type="STRING" id="3702.F4I8U2"/>
<dbReference type="PaxDb" id="3702-AT1G05610.1"/>
<dbReference type="EnsemblPlants" id="AT1G05610.1">
    <property type="protein sequence ID" value="AT1G05610.1"/>
    <property type="gene ID" value="AT1G05610"/>
</dbReference>
<dbReference type="GeneID" id="837066"/>
<dbReference type="Gramene" id="AT1G05610.1">
    <property type="protein sequence ID" value="AT1G05610.1"/>
    <property type="gene ID" value="AT1G05610"/>
</dbReference>
<dbReference type="KEGG" id="ath:AT1G05610"/>
<dbReference type="Araport" id="AT1G05610"/>
<dbReference type="TAIR" id="AT1G05610">
    <property type="gene designation" value="APS2"/>
</dbReference>
<dbReference type="eggNOG" id="KOG1322">
    <property type="taxonomic scope" value="Eukaryota"/>
</dbReference>
<dbReference type="HOGENOM" id="CLU_029499_14_1_1"/>
<dbReference type="InParanoid" id="F4I8U2"/>
<dbReference type="OMA" id="LSSSKWW"/>
<dbReference type="OrthoDB" id="1733332at2759"/>
<dbReference type="PRO" id="PR:F4I8U2"/>
<dbReference type="Proteomes" id="UP000006548">
    <property type="component" value="Chromosome 1"/>
</dbReference>
<dbReference type="ExpressionAtlas" id="F4I8U2">
    <property type="expression patterns" value="baseline and differential"/>
</dbReference>
<dbReference type="GO" id="GO:0009507">
    <property type="term" value="C:chloroplast"/>
    <property type="evidence" value="ECO:0007669"/>
    <property type="project" value="UniProtKB-SubCell"/>
</dbReference>
<dbReference type="GO" id="GO:0005524">
    <property type="term" value="F:ATP binding"/>
    <property type="evidence" value="ECO:0007669"/>
    <property type="project" value="UniProtKB-KW"/>
</dbReference>
<dbReference type="GO" id="GO:0008878">
    <property type="term" value="F:glucose-1-phosphate adenylyltransferase activity"/>
    <property type="evidence" value="ECO:0007669"/>
    <property type="project" value="InterPro"/>
</dbReference>
<dbReference type="GO" id="GO:0005978">
    <property type="term" value="P:glycogen biosynthetic process"/>
    <property type="evidence" value="ECO:0007669"/>
    <property type="project" value="InterPro"/>
</dbReference>
<dbReference type="CDD" id="cd02508">
    <property type="entry name" value="ADP_Glucose_PP"/>
    <property type="match status" value="1"/>
</dbReference>
<dbReference type="CDD" id="cd04651">
    <property type="entry name" value="LbH_G1P_AT_C"/>
    <property type="match status" value="1"/>
</dbReference>
<dbReference type="Gene3D" id="2.160.10.10">
    <property type="entry name" value="Hexapeptide repeat proteins"/>
    <property type="match status" value="1"/>
</dbReference>
<dbReference type="Gene3D" id="3.90.550.10">
    <property type="entry name" value="Spore Coat Polysaccharide Biosynthesis Protein SpsA, Chain A"/>
    <property type="match status" value="1"/>
</dbReference>
<dbReference type="InterPro" id="IPR011831">
    <property type="entry name" value="ADP-Glc_PPase"/>
</dbReference>
<dbReference type="InterPro" id="IPR005836">
    <property type="entry name" value="ADP_Glu_pyroP_CS"/>
</dbReference>
<dbReference type="InterPro" id="IPR005835">
    <property type="entry name" value="NTP_transferase_dom"/>
</dbReference>
<dbReference type="InterPro" id="IPR029044">
    <property type="entry name" value="Nucleotide-diphossugar_trans"/>
</dbReference>
<dbReference type="InterPro" id="IPR011004">
    <property type="entry name" value="Trimer_LpxA-like_sf"/>
</dbReference>
<dbReference type="PANTHER" id="PTHR43523">
    <property type="entry name" value="GLUCOSE-1-PHOSPHATE ADENYLYLTRANSFERASE-RELATED"/>
    <property type="match status" value="1"/>
</dbReference>
<dbReference type="PANTHER" id="PTHR43523:SF17">
    <property type="entry name" value="INACTIVE GLUCOSE-1-PHOSPHATE ADENYLYLTRANSFERASE SMALL SUBUNIT 2, CHLOROPLASTIC"/>
    <property type="match status" value="1"/>
</dbReference>
<dbReference type="Pfam" id="PF25247">
    <property type="entry name" value="LbH_GLGC"/>
    <property type="match status" value="1"/>
</dbReference>
<dbReference type="Pfam" id="PF00483">
    <property type="entry name" value="NTP_transferase"/>
    <property type="match status" value="1"/>
</dbReference>
<dbReference type="SUPFAM" id="SSF53448">
    <property type="entry name" value="Nucleotide-diphospho-sugar transferases"/>
    <property type="match status" value="1"/>
</dbReference>
<dbReference type="SUPFAM" id="SSF51161">
    <property type="entry name" value="Trimeric LpxA-like enzymes"/>
    <property type="match status" value="1"/>
</dbReference>
<dbReference type="PROSITE" id="PS00809">
    <property type="entry name" value="ADP_GLC_PYROPHOSPH_2"/>
    <property type="match status" value="1"/>
</dbReference>
<protein>
    <recommendedName>
        <fullName evidence="6">Inactive glucose-1-phosphate adenylyltransferase small subunit 2, chloroplastic</fullName>
    </recommendedName>
    <alternativeName>
        <fullName evidence="7">ADP-Glc pyrophosphorylase small subunit-like</fullName>
    </alternativeName>
    <alternativeName>
        <fullName evidence="6">ADP-glucose pyrophosphorylase small subunit 2</fullName>
        <shortName evidence="6">ApS2</shortName>
    </alternativeName>
</protein>
<organism evidence="11">
    <name type="scientific">Arabidopsis thaliana</name>
    <name type="common">Mouse-ear cress</name>
    <dbReference type="NCBI Taxonomy" id="3702"/>
    <lineage>
        <taxon>Eukaryota</taxon>
        <taxon>Viridiplantae</taxon>
        <taxon>Streptophyta</taxon>
        <taxon>Embryophyta</taxon>
        <taxon>Tracheophyta</taxon>
        <taxon>Spermatophyta</taxon>
        <taxon>Magnoliopsida</taxon>
        <taxon>eudicotyledons</taxon>
        <taxon>Gunneridae</taxon>
        <taxon>Pentapetalae</taxon>
        <taxon>rosids</taxon>
        <taxon>malvids</taxon>
        <taxon>Brassicales</taxon>
        <taxon>Brassicaceae</taxon>
        <taxon>Camelineae</taxon>
        <taxon>Arabidopsis</taxon>
    </lineage>
</organism>
<evidence type="ECO:0000250" key="1">
    <source>
        <dbReference type="UniProtKB" id="P55229"/>
    </source>
</evidence>
<evidence type="ECO:0000255" key="2"/>
<evidence type="ECO:0000269" key="3">
    <source>
    </source>
</evidence>
<evidence type="ECO:0000269" key="4">
    <source>
    </source>
</evidence>
<evidence type="ECO:0000269" key="5">
    <source>
    </source>
</evidence>
<evidence type="ECO:0000303" key="6">
    <source>
    </source>
</evidence>
<evidence type="ECO:0000303" key="7">
    <source>
    </source>
</evidence>
<evidence type="ECO:0000305" key="8"/>
<evidence type="ECO:0000312" key="9">
    <source>
        <dbReference type="Araport" id="AT1G05610"/>
    </source>
</evidence>
<evidence type="ECO:0000312" key="10">
    <source>
        <dbReference type="EMBL" id="AAD30613.1"/>
    </source>
</evidence>
<evidence type="ECO:0000312" key="11">
    <source>
        <dbReference type="Proteomes" id="UP000006548"/>
    </source>
</evidence>
<sequence length="476" mass="53335">MQISSSSFITKFTNLHMVRSTSDHHQWRHNYNLKQLFIPNLSVSNSQHLPLNQSVAAIVFGGGSDSELYPLTKTRSKGAIPIAANYRLIDAVISNCINSGITKIYAITQFNSTSLNSHLSKAYSGFGLGKDRFVEVIAAYQSLEDQGWFQGTADAIRRCLWVFEEFPVTEFLVLPGHHLYKMDYKMLIEDHRRSRADITIVGLSSVTDHDFGFGFMEVDSTNAVTRFTIKGQQDLISVANRTATRSDGTSSCSVPSAGIYVIGREQMVKLLRECLIKSKDLASEIIPGAISEGMKVKAHMFDGYWEDVRSIGAYYRANMESIKSYRFYDRQCPLYTMPRCLPPSSMSVAVITNSIIGDGCILDKCVIRGSVVGMRTRIADEVIVEDSIIVGSDIYEMEEDVRRKGKEKKIEIRIGIGEKSRIRRAIVDKNARIGKNVMIINRDNVEEGNREAQGYVIREGIIIILRNAVIPNDSIL</sequence>
<comment type="subunit">
    <text evidence="3">Heterotetramer.</text>
</comment>
<comment type="subcellular location">
    <subcellularLocation>
        <location evidence="1">Plastid</location>
        <location evidence="1">Chloroplast</location>
    </subcellularLocation>
</comment>
<comment type="tissue specificity">
    <text evidence="4 5">Expressed at very low levels in leaves, inflorescences, fruits, and roots.</text>
</comment>
<comment type="developmental stage">
    <text evidence="5">In leaves, mainly observed in starch-producing tissues including the mesophyll and the vascular companions cells. In flowers, detected in the stamens and pistil, as well as in the receptacle. Also expressed in the embryo.</text>
</comment>
<comment type="similarity">
    <text evidence="8">Belongs to the bacterial/plant glucose-1-phosphate adenylyltransferase family.</text>
</comment>
<comment type="caution">
    <text evidence="3">No detectable activity.</text>
</comment>
<comment type="sequence caution" evidence="8">
    <conflict type="erroneous gene model prediction">
        <sequence resource="EMBL-CDS" id="AAD30613"/>
    </conflict>
</comment>
<accession>F4I8U2</accession>
<accession>Q7YKW3</accession>
<accession>Q9SYK2</accession>
<name>APS2L_ARATH</name>
<gene>
    <name evidence="6" type="primary">APS2</name>
    <name evidence="9" type="ordered locus">At1g05610</name>
    <name evidence="10" type="ORF">F3F20.6</name>
</gene>
<keyword id="KW-0067">ATP-binding</keyword>
<keyword id="KW-0150">Chloroplast</keyword>
<keyword id="KW-0547">Nucleotide-binding</keyword>
<keyword id="KW-0934">Plastid</keyword>
<keyword id="KW-1185">Reference proteome</keyword>
<keyword id="KW-0809">Transit peptide</keyword>
<proteinExistence type="evidence at protein level"/>
<reference key="1">
    <citation type="journal article" date="2003" name="J. Biol. Chem.">
        <title>The different large subunit isoforms of Arabidopsis thaliana ADP-glucose pyrophosphorylase confer distinct kinetic and regulatory properties to the heterotetrameric enzyme.</title>
        <authorList>
            <person name="Crevillen P."/>
            <person name="Ballicora M.A."/>
            <person name="Merida A."/>
            <person name="Preiss J."/>
            <person name="Romero J.M."/>
        </authorList>
    </citation>
    <scope>NUCLEOTIDE SEQUENCE [MRNA]</scope>
    <scope>CAUTION</scope>
    <scope>SUBUNIT</scope>
    <source>
        <strain>cv. Columbia</strain>
    </source>
</reference>
<reference key="2">
    <citation type="journal article" date="2000" name="Nature">
        <title>Sequence and analysis of chromosome 1 of the plant Arabidopsis thaliana.</title>
        <authorList>
            <person name="Theologis A."/>
            <person name="Ecker J.R."/>
            <person name="Palm C.J."/>
            <person name="Federspiel N.A."/>
            <person name="Kaul S."/>
            <person name="White O."/>
            <person name="Alonso J."/>
            <person name="Altafi H."/>
            <person name="Araujo R."/>
            <person name="Bowman C.L."/>
            <person name="Brooks S.Y."/>
            <person name="Buehler E."/>
            <person name="Chan A."/>
            <person name="Chao Q."/>
            <person name="Chen H."/>
            <person name="Cheuk R.F."/>
            <person name="Chin C.W."/>
            <person name="Chung M.K."/>
            <person name="Conn L."/>
            <person name="Conway A.B."/>
            <person name="Conway A.R."/>
            <person name="Creasy T.H."/>
            <person name="Dewar K."/>
            <person name="Dunn P."/>
            <person name="Etgu P."/>
            <person name="Feldblyum T.V."/>
            <person name="Feng J.-D."/>
            <person name="Fong B."/>
            <person name="Fujii C.Y."/>
            <person name="Gill J.E."/>
            <person name="Goldsmith A.D."/>
            <person name="Haas B."/>
            <person name="Hansen N.F."/>
            <person name="Hughes B."/>
            <person name="Huizar L."/>
            <person name="Hunter J.L."/>
            <person name="Jenkins J."/>
            <person name="Johnson-Hopson C."/>
            <person name="Khan S."/>
            <person name="Khaykin E."/>
            <person name="Kim C.J."/>
            <person name="Koo H.L."/>
            <person name="Kremenetskaia I."/>
            <person name="Kurtz D.B."/>
            <person name="Kwan A."/>
            <person name="Lam B."/>
            <person name="Langin-Hooper S."/>
            <person name="Lee A."/>
            <person name="Lee J.M."/>
            <person name="Lenz C.A."/>
            <person name="Li J.H."/>
            <person name="Li Y.-P."/>
            <person name="Lin X."/>
            <person name="Liu S.X."/>
            <person name="Liu Z.A."/>
            <person name="Luros J.S."/>
            <person name="Maiti R."/>
            <person name="Marziali A."/>
            <person name="Militscher J."/>
            <person name="Miranda M."/>
            <person name="Nguyen M."/>
            <person name="Nierman W.C."/>
            <person name="Osborne B.I."/>
            <person name="Pai G."/>
            <person name="Peterson J."/>
            <person name="Pham P.K."/>
            <person name="Rizzo M."/>
            <person name="Rooney T."/>
            <person name="Rowley D."/>
            <person name="Sakano H."/>
            <person name="Salzberg S.L."/>
            <person name="Schwartz J.R."/>
            <person name="Shinn P."/>
            <person name="Southwick A.M."/>
            <person name="Sun H."/>
            <person name="Tallon L.J."/>
            <person name="Tambunga G."/>
            <person name="Toriumi M.J."/>
            <person name="Town C.D."/>
            <person name="Utterback T."/>
            <person name="Van Aken S."/>
            <person name="Vaysberg M."/>
            <person name="Vysotskaia V.S."/>
            <person name="Walker M."/>
            <person name="Wu D."/>
            <person name="Yu G."/>
            <person name="Fraser C.M."/>
            <person name="Venter J.C."/>
            <person name="Davis R.W."/>
        </authorList>
    </citation>
    <scope>NUCLEOTIDE SEQUENCE [LARGE SCALE GENOMIC DNA]</scope>
    <source>
        <strain>cv. Columbia</strain>
    </source>
</reference>
<reference key="3">
    <citation type="journal article" date="2017" name="Plant J.">
        <title>Araport11: a complete reannotation of the Arabidopsis thaliana reference genome.</title>
        <authorList>
            <person name="Cheng C.Y."/>
            <person name="Krishnakumar V."/>
            <person name="Chan A.P."/>
            <person name="Thibaud-Nissen F."/>
            <person name="Schobel S."/>
            <person name="Town C.D."/>
        </authorList>
    </citation>
    <scope>GENOME REANNOTATION</scope>
    <source>
        <strain>cv. Columbia</strain>
    </source>
</reference>
<reference key="4">
    <citation type="journal article" date="2004" name="Plant Physiol.">
        <title>Diurnal changes in the transcriptome encoding enzymes of starch metabolism provide evidence for both transcriptional and posttranscriptional regulation of starch metabolism in Arabidopsis leaves.</title>
        <authorList>
            <person name="Smith S.M."/>
            <person name="Fulton D.C."/>
            <person name="Chia T."/>
            <person name="Thorneycroft D."/>
            <person name="Chapple A."/>
            <person name="Dunstan H."/>
            <person name="Hylton C."/>
            <person name="Zeeman S.C."/>
            <person name="Smith A.M."/>
        </authorList>
    </citation>
    <scope>TISSUE SPECIFICITY</scope>
    <scope>GENE FAMILY</scope>
    <scope>NOMENCLATURE</scope>
</reference>
<reference key="5">
    <citation type="journal article" date="2005" name="J. Biol. Chem.">
        <title>Differential pattern of expression and sugar regulation of Arabidopsis thaliana ADP-glucose pyrophosphorylase-encoding genes.</title>
        <authorList>
            <person name="Crevillen P."/>
            <person name="Ventriglia T."/>
            <person name="Pinto F."/>
            <person name="Orea A."/>
            <person name="Merida A."/>
            <person name="Romero J.M."/>
        </authorList>
    </citation>
    <scope>TISSUE SPECIFICITY</scope>
    <scope>DEVELOPMENTAL STAGE</scope>
</reference>
<feature type="transit peptide" description="Chloroplast" evidence="2">
    <location>
        <begin position="1"/>
        <end position="55"/>
    </location>
</feature>
<feature type="chain" id="PRO_0000431762" description="Inactive glucose-1-phosphate adenylyltransferase small subunit 2, chloroplastic">
    <location>
        <begin position="56"/>
        <end position="476"/>
    </location>
</feature>
<feature type="sequence conflict" description="In Ref. 1; CAD60664." evidence="8" ref="1">
    <original>N</original>
    <variation>K</variation>
    <location>
        <position position="222"/>
    </location>
</feature>